<proteinExistence type="evidence at protein level"/>
<feature type="chain" id="PRO_0000032373" description="Chemotaxis protein CheA">
    <location>
        <begin position="1"/>
        <end position="654"/>
    </location>
</feature>
<feature type="domain" description="HPt" evidence="3">
    <location>
        <begin position="1"/>
        <end position="105"/>
    </location>
</feature>
<feature type="domain" description="Histidine kinase" evidence="2">
    <location>
        <begin position="257"/>
        <end position="509"/>
    </location>
</feature>
<feature type="domain" description="CheW-like" evidence="1">
    <location>
        <begin position="511"/>
        <end position="646"/>
    </location>
</feature>
<feature type="modified residue" description="Phosphohistidine; by autocatalysis" evidence="2 5">
    <location>
        <position position="48"/>
    </location>
</feature>
<feature type="splice variant" id="VSP_018886" description="In isoform cheA(S)." evidence="6">
    <location>
        <begin position="1"/>
        <end position="97"/>
    </location>
</feature>
<feature type="sequence conflict" description="In Ref. 1; AAA23573/AAA23574." evidence="6" ref="1">
    <original>R</original>
    <variation>P</variation>
    <location>
        <position position="166"/>
    </location>
</feature>
<feature type="sequence conflict" description="In Ref. 5; AAA23564." evidence="6" ref="5">
    <original>GERVLEVRGEYLPIVELW</original>
    <variation>ASGCWKCGVNICPSSNCG</variation>
    <location>
        <begin position="548"/>
        <end position="565"/>
    </location>
</feature>
<feature type="sequence conflict" description="In Ref. 5; AAA23564." evidence="6" ref="5">
    <original>V</original>
    <variation>A</variation>
    <location>
        <position position="606"/>
    </location>
</feature>
<feature type="helix" evidence="10">
    <location>
        <begin position="5"/>
        <end position="7"/>
    </location>
</feature>
<feature type="helix" evidence="10">
    <location>
        <begin position="9"/>
        <end position="29"/>
    </location>
</feature>
<feature type="helix" evidence="10">
    <location>
        <begin position="37"/>
        <end position="56"/>
    </location>
</feature>
<feature type="helix" evidence="10">
    <location>
        <begin position="60"/>
        <end position="77"/>
    </location>
</feature>
<feature type="helix" evidence="10">
    <location>
        <begin position="85"/>
        <end position="106"/>
    </location>
</feature>
<feature type="helix" evidence="10">
    <location>
        <begin position="113"/>
        <end position="130"/>
    </location>
</feature>
<feature type="strand" evidence="10">
    <location>
        <begin position="140"/>
        <end position="145"/>
    </location>
</feature>
<feature type="strand" evidence="10">
    <location>
        <begin position="151"/>
        <end position="154"/>
    </location>
</feature>
<feature type="strand" evidence="8">
    <location>
        <begin position="161"/>
        <end position="164"/>
    </location>
</feature>
<feature type="helix" evidence="8">
    <location>
        <begin position="171"/>
        <end position="182"/>
    </location>
</feature>
<feature type="strand" evidence="8">
    <location>
        <begin position="186"/>
        <end position="190"/>
    </location>
</feature>
<feature type="strand" evidence="8">
    <location>
        <begin position="195"/>
        <end position="198"/>
    </location>
</feature>
<feature type="strand" evidence="9">
    <location>
        <begin position="201"/>
        <end position="204"/>
    </location>
</feature>
<feature type="helix" evidence="8">
    <location>
        <begin position="205"/>
        <end position="212"/>
    </location>
</feature>
<feature type="turn" evidence="8">
    <location>
        <begin position="213"/>
        <end position="215"/>
    </location>
</feature>
<feature type="strand" evidence="8">
    <location>
        <begin position="220"/>
        <end position="224"/>
    </location>
</feature>
<reference key="1">
    <citation type="journal article" date="1991" name="J. Bacteriol.">
        <title>Tandem translation starts in the cheA locus of Escherichia coli.</title>
        <authorList>
            <person name="Kofoid E.C."/>
            <person name="Parkinson J.S."/>
        </authorList>
    </citation>
    <scope>NUCLEOTIDE SEQUENCE [GENOMIC DNA]</scope>
</reference>
<reference key="2">
    <citation type="journal article" date="1996" name="DNA Res.">
        <title>A 460-kb DNA sequence of the Escherichia coli K-12 genome corresponding to the 40.1-50.0 min region on the linkage map.</title>
        <authorList>
            <person name="Itoh T."/>
            <person name="Aiba H."/>
            <person name="Baba T."/>
            <person name="Fujita K."/>
            <person name="Hayashi K."/>
            <person name="Inada T."/>
            <person name="Isono K."/>
            <person name="Kasai H."/>
            <person name="Kimura S."/>
            <person name="Kitakawa M."/>
            <person name="Kitagawa M."/>
            <person name="Makino K."/>
            <person name="Miki T."/>
            <person name="Mizobuchi K."/>
            <person name="Mori H."/>
            <person name="Mori T."/>
            <person name="Motomura K."/>
            <person name="Nakade S."/>
            <person name="Nakamura Y."/>
            <person name="Nashimoto H."/>
            <person name="Nishio Y."/>
            <person name="Oshima T."/>
            <person name="Saito N."/>
            <person name="Sampei G."/>
            <person name="Seki Y."/>
            <person name="Sivasundaram S."/>
            <person name="Tagami H."/>
            <person name="Takeda J."/>
            <person name="Takemoto K."/>
            <person name="Wada C."/>
            <person name="Yamamoto Y."/>
            <person name="Horiuchi T."/>
        </authorList>
    </citation>
    <scope>NUCLEOTIDE SEQUENCE [LARGE SCALE GENOMIC DNA]</scope>
    <source>
        <strain>K12 / W3110 / ATCC 27325 / DSM 5911</strain>
    </source>
</reference>
<reference key="3">
    <citation type="journal article" date="1997" name="Science">
        <title>The complete genome sequence of Escherichia coli K-12.</title>
        <authorList>
            <person name="Blattner F.R."/>
            <person name="Plunkett G. III"/>
            <person name="Bloch C.A."/>
            <person name="Perna N.T."/>
            <person name="Burland V."/>
            <person name="Riley M."/>
            <person name="Collado-Vides J."/>
            <person name="Glasner J.D."/>
            <person name="Rode C.K."/>
            <person name="Mayhew G.F."/>
            <person name="Gregor J."/>
            <person name="Davis N.W."/>
            <person name="Kirkpatrick H.A."/>
            <person name="Goeden M.A."/>
            <person name="Rose D.J."/>
            <person name="Mau B."/>
            <person name="Shao Y."/>
        </authorList>
    </citation>
    <scope>NUCLEOTIDE SEQUENCE [LARGE SCALE GENOMIC DNA]</scope>
    <source>
        <strain>K12 / MG1655 / ATCC 47076</strain>
    </source>
</reference>
<reference key="4">
    <citation type="journal article" date="2006" name="Mol. Syst. Biol.">
        <title>Highly accurate genome sequences of Escherichia coli K-12 strains MG1655 and W3110.</title>
        <authorList>
            <person name="Hayashi K."/>
            <person name="Morooka N."/>
            <person name="Yamamoto Y."/>
            <person name="Fujita K."/>
            <person name="Isono K."/>
            <person name="Choi S."/>
            <person name="Ohtsubo E."/>
            <person name="Baba T."/>
            <person name="Wanner B.L."/>
            <person name="Mori H."/>
            <person name="Horiuchi T."/>
        </authorList>
    </citation>
    <scope>NUCLEOTIDE SEQUENCE [LARGE SCALE GENOMIC DNA]</scope>
    <source>
        <strain>K12 / W3110 / ATCC 27325 / DSM 5911</strain>
    </source>
</reference>
<reference key="5">
    <citation type="journal article" date="1986" name="J. Bacteriol.">
        <title>Nucleotide sequence corresponding to five chemotaxis genes in Escherichia coli.</title>
        <authorList>
            <person name="Mutoh N."/>
            <person name="Simon M.I."/>
        </authorList>
    </citation>
    <scope>NUCLEOTIDE SEQUENCE [GENOMIC DNA] OF 430-654</scope>
</reference>
<reference key="6">
    <citation type="journal article" date="1988" name="Cell">
        <title>Mutants defective in bacterial chemotaxis show modified protein phosphorylation.</title>
        <authorList>
            <person name="Oosawa K."/>
            <person name="Hess J.F."/>
            <person name="Simon M.I."/>
        </authorList>
    </citation>
    <scope>PHOSPHORYLATION AT HIS-48</scope>
    <scope>DOMAINS</scope>
</reference>
<reference key="7">
    <citation type="journal article" date="1991" name="Proc. Natl. Acad. Sci. U.S.A.">
        <title>Bacterial chemotaxis signaling complexes: formation of a CheA/CheW complex enhances autophosphorylation and affinity for CheY.</title>
        <authorList>
            <person name="McNally D.F."/>
            <person name="Matsumura P."/>
        </authorList>
    </citation>
    <scope>SUBUNIT</scope>
</reference>
<reference key="8">
    <citation type="journal article" date="1996" name="Biochemistry">
        <title>Phosphotransfer and CheY-binding domains of the histidine autokinase CheA are joined by a flexible linker.</title>
        <authorList>
            <person name="Zhou H."/>
            <person name="McEvoy M.M."/>
            <person name="Lowry D.F."/>
            <person name="Swanson R.V."/>
            <person name="Simon M.I."/>
            <person name="Dahlquist F.W."/>
        </authorList>
    </citation>
    <scope>STRUCTURE BY NMR OF 1-233</scope>
</reference>
<reference key="9">
    <citation type="journal article" date="1996" name="Biochemistry">
        <title>Structure and dynamics of a CheY-binding domain of the chemotaxis kinase CheA determined by nuclear magnetic resonance spectroscopy.</title>
        <authorList>
            <person name="McEvoy M.M."/>
            <person name="Muhandiram D.R."/>
            <person name="Kyw L.E."/>
            <person name="Dahlquist F.W."/>
        </authorList>
    </citation>
    <scope>STRUCTURE BY NMR OF 124-257</scope>
</reference>
<reference key="10">
    <citation type="journal article" date="1997" name="Biochemistry">
        <title>Phosphotransfer site of the chemotaxis-specific protein kinase CheA as revealed by NMR.</title>
        <authorList>
            <person name="Zhou H."/>
            <person name="Dahlquist F.W."/>
        </authorList>
    </citation>
    <scope>STRUCTURE BY NMR OF 1-134</scope>
</reference>
<reference key="11">
    <citation type="journal article" date="1998" name="Nat. Struct. Biol.">
        <title>Structure of the CheY-binding domain of histidine kinase CheA in complex with CheY.</title>
        <authorList>
            <person name="Welch M."/>
            <person name="Chinardet N."/>
            <person name="Mourey L."/>
            <person name="Birck C."/>
            <person name="Samama J.-P."/>
        </authorList>
    </citation>
    <scope>X-RAY CRYSTALLOGRAPHY (2.95 ANGSTROMS) OF 158-228</scope>
</reference>
<reference key="12">
    <citation type="journal article" date="1998" name="Proc. Natl. Acad. Sci. U.S.A.">
        <title>Two binding modes reveal flexibility in kinase/response regulator interactions in the bacterial chemotaxis pathway.</title>
        <authorList>
            <person name="McEvoy M.M."/>
            <person name="Hausrath A.C."/>
            <person name="Randolph G.B."/>
            <person name="Remington S.J."/>
            <person name="Dahlquist F.W."/>
        </authorList>
    </citation>
    <scope>X-RAY CRYSTALLOGRAPHY (2.0 ANGSTROMS) OF 158-226</scope>
</reference>
<organism>
    <name type="scientific">Escherichia coli (strain K12)</name>
    <dbReference type="NCBI Taxonomy" id="83333"/>
    <lineage>
        <taxon>Bacteria</taxon>
        <taxon>Pseudomonadati</taxon>
        <taxon>Pseudomonadota</taxon>
        <taxon>Gammaproteobacteria</taxon>
        <taxon>Enterobacterales</taxon>
        <taxon>Enterobacteriaceae</taxon>
        <taxon>Escherichia</taxon>
    </lineage>
</organism>
<evidence type="ECO:0000255" key="1">
    <source>
        <dbReference type="PROSITE-ProRule" id="PRU00052"/>
    </source>
</evidence>
<evidence type="ECO:0000255" key="2">
    <source>
        <dbReference type="PROSITE-ProRule" id="PRU00107"/>
    </source>
</evidence>
<evidence type="ECO:0000255" key="3">
    <source>
        <dbReference type="PROSITE-ProRule" id="PRU00110"/>
    </source>
</evidence>
<evidence type="ECO:0000269" key="4">
    <source>
    </source>
</evidence>
<evidence type="ECO:0000269" key="5">
    <source>
    </source>
</evidence>
<evidence type="ECO:0000305" key="6"/>
<evidence type="ECO:0000312" key="7">
    <source>
        <dbReference type="EMBL" id="AAC74958.2"/>
    </source>
</evidence>
<evidence type="ECO:0007829" key="8">
    <source>
        <dbReference type="PDB" id="1EAY"/>
    </source>
</evidence>
<evidence type="ECO:0007829" key="9">
    <source>
        <dbReference type="PDB" id="1FWP"/>
    </source>
</evidence>
<evidence type="ECO:0007829" key="10">
    <source>
        <dbReference type="PDB" id="2LP4"/>
    </source>
</evidence>
<comment type="function">
    <text>Involved in the transmission of sensory signals from the chemoreceptors to the flagellar motors. CheA is autophosphorylated; it can transfer its phosphate group to either CheB or CheY.</text>
</comment>
<comment type="catalytic activity">
    <reaction>
        <text>ATP + protein L-histidine = ADP + protein N-phospho-L-histidine.</text>
        <dbReference type="EC" id="2.7.13.3"/>
    </reaction>
</comment>
<comment type="subunit">
    <text evidence="4">An in vitro complex of CheW/CheA(L)/CheA(S) in a 1:1:1 ratio increases the autophosphorylation of CheA and is required for the binding of CheY, the phosphorylation substrate. This complex accounts for 10% of the total number of molecules.</text>
</comment>
<comment type="interaction">
    <interactant intactId="EBI-1026773">
        <id>P07363</id>
    </interactant>
    <interactant intactId="EBI-1125895">
        <id>P07330</id>
        <label>cheB</label>
    </interactant>
    <organismsDiffer>false</organismsDiffer>
    <experiments>3</experiments>
</comment>
<comment type="interaction">
    <interactant intactId="EBI-1026773">
        <id>P07363</id>
    </interactant>
    <interactant intactId="EBI-546693">
        <id>P0AE67</id>
        <label>cheY</label>
    </interactant>
    <organismsDiffer>false</organismsDiffer>
    <experiments>7</experiments>
</comment>
<comment type="interaction">
    <interactant intactId="EBI-1026773">
        <id>P07363</id>
    </interactant>
    <interactant intactId="EBI-546726">
        <id>P0A9H9</id>
        <label>cheZ</label>
    </interactant>
    <organismsDiffer>false</organismsDiffer>
    <experiments>3</experiments>
</comment>
<comment type="interaction">
    <interactant intactId="EBI-1026773">
        <id>P07363</id>
    </interactant>
    <interactant intactId="EBI-1125130">
        <id>P07017</id>
        <label>tar</label>
    </interactant>
    <organismsDiffer>false</organismsDiffer>
    <experiments>4</experiments>
</comment>
<comment type="subcellular location">
    <subcellularLocation>
        <location>Cytoplasm</location>
    </subcellularLocation>
</comment>
<comment type="alternative products">
    <event type="alternative initiation"/>
    <isoform>
        <id>P07363-1</id>
        <name>cheA(L)</name>
        <name>long</name>
        <name>large</name>
        <sequence type="displayed"/>
    </isoform>
    <isoform>
        <id>P07363-2</id>
        <name>cheA(S)</name>
        <name>short</name>
        <sequence type="described" ref="VSP_018886"/>
    </isoform>
</comment>
<comment type="domain">
    <text evidence="5">May have three functional domains: one for interaction with CheB and CheY, a second for regulating phosphorylation and controlling the stability of the protein, and a third for receiving input signals regulating CheA activity.</text>
</comment>
<protein>
    <recommendedName>
        <fullName>Chemotaxis protein CheA</fullName>
        <ecNumber>2.7.13.3</ecNumber>
    </recommendedName>
</protein>
<accession>P07363</accession>
<accession>P76302</accession>
<gene>
    <name type="primary">cheA</name>
    <name evidence="7" type="ordered locus">b1888</name>
    <name type="ordered locus">JW1877</name>
</gene>
<name>CHEA_ECOLI</name>
<keyword id="KW-0002">3D-structure</keyword>
<keyword id="KW-0024">Alternative initiation</keyword>
<keyword id="KW-0067">ATP-binding</keyword>
<keyword id="KW-0145">Chemotaxis</keyword>
<keyword id="KW-0963">Cytoplasm</keyword>
<keyword id="KW-0418">Kinase</keyword>
<keyword id="KW-0547">Nucleotide-binding</keyword>
<keyword id="KW-0597">Phosphoprotein</keyword>
<keyword id="KW-1185">Reference proteome</keyword>
<keyword id="KW-0808">Transferase</keyword>
<keyword id="KW-0902">Two-component regulatory system</keyword>
<sequence>MSMDISDFYQTFFDEADELLADMEQHLLVLQPEAPDAEQLNAIFRAAHSIKGGAGTFGFSVLQETTHLMENLLDEARRGEMQLNTDIINLFLETKDIMQEQLDAYKQSQEPDAASFDYICQALRQLALEAKGETPSAVTRLSVVAKSEPQDEQSRSQSPRRIILSRLKAGEVDLLEEELGHLTTLTDVVKGADSLSAILPGDIAEDDITAVLCFVIEADQITFETVEVSPKISTPPVLKLAAEQAPTGRVEREKTTRSNESTSIRVAVEKVDQLINLVGELVITQSMLAQRSSELDPVNHGDLITSMGQLQRNARDLQESVMSIRMMPMEYVFSRYPRLVRDLAGKLGKQVELTLVGSSTELDKSLIERIIDPLTHLVRNSLDHGIELPEKRLAAGKNSVGNLILSAEHQGGNICIEVTDDGAGLNRERILAKAASQGLTVSENMSDDEVAMLIFAPGFSTAEQVTDVSGRGVGMDVVKRNIQKMGGHVEIQSKQGTGTTIRILLPLTLAILDGMSVRVADEVFILPLNAVMESLQPREADLHPLAGGERVLEVRGEYLPIVELWKVFNVAGAKTEATQGIVVILQSGGRRYALLVDQLIGQHQVVVKNLESNYRKVPGISAATILGDGSVALIVDVSALQAINREQRMANTAA</sequence>
<dbReference type="EC" id="2.7.13.3"/>
<dbReference type="EMBL" id="M34669">
    <property type="protein sequence ID" value="AAA23573.1"/>
    <property type="molecule type" value="Genomic_DNA"/>
</dbReference>
<dbReference type="EMBL" id="M34669">
    <property type="protein sequence ID" value="AAA23574.1"/>
    <property type="molecule type" value="Genomic_DNA"/>
</dbReference>
<dbReference type="EMBL" id="U00096">
    <property type="protein sequence ID" value="AAC74958.2"/>
    <property type="molecule type" value="Genomic_DNA"/>
</dbReference>
<dbReference type="EMBL" id="U00096">
    <property type="protein sequence ID" value="UMR55122.1"/>
    <property type="molecule type" value="Genomic_DNA"/>
</dbReference>
<dbReference type="EMBL" id="AP009048">
    <property type="protein sequence ID" value="BAA15709.1"/>
    <property type="molecule type" value="Genomic_DNA"/>
</dbReference>
<dbReference type="EMBL" id="AH000879">
    <property type="protein sequence ID" value="AAA23564.1"/>
    <property type="molecule type" value="Genomic_DNA"/>
</dbReference>
<dbReference type="PIR" id="H64951">
    <property type="entry name" value="QRECCS"/>
</dbReference>
<dbReference type="RefSeq" id="NP_416402.1">
    <property type="nucleotide sequence ID" value="NC_000913.3"/>
</dbReference>
<dbReference type="RefSeq" id="WP_001350517.1">
    <property type="nucleotide sequence ID" value="NZ_LN832404.1"/>
</dbReference>
<dbReference type="PDB" id="1A0O">
    <property type="method" value="X-ray"/>
    <property type="resolution" value="2.95 A"/>
    <property type="chains" value="B/D/F/H=124-257"/>
</dbReference>
<dbReference type="PDB" id="1EAY">
    <property type="method" value="X-ray"/>
    <property type="resolution" value="2.00 A"/>
    <property type="chains" value="C/D=156-228"/>
</dbReference>
<dbReference type="PDB" id="1FFG">
    <property type="method" value="X-ray"/>
    <property type="resolution" value="2.10 A"/>
    <property type="chains" value="B/D=124-257"/>
</dbReference>
<dbReference type="PDB" id="1FFS">
    <property type="method" value="X-ray"/>
    <property type="resolution" value="2.40 A"/>
    <property type="chains" value="B/D=124-257"/>
</dbReference>
<dbReference type="PDB" id="1FFW">
    <property type="method" value="X-ray"/>
    <property type="resolution" value="2.70 A"/>
    <property type="chains" value="B/D=124-257"/>
</dbReference>
<dbReference type="PDB" id="1FWP">
    <property type="method" value="NMR"/>
    <property type="chains" value="A=124-262"/>
</dbReference>
<dbReference type="PDB" id="2LP4">
    <property type="method" value="NMR"/>
    <property type="chains" value="A=1-225"/>
</dbReference>
<dbReference type="PDB" id="6S1K">
    <property type="method" value="EM"/>
    <property type="resolution" value="8.38 A"/>
    <property type="chains" value="A/B=1-654"/>
</dbReference>
<dbReference type="PDB" id="8C5V">
    <property type="method" value="EM"/>
    <property type="resolution" value="12.00 A"/>
    <property type="chains" value="A/B=257-647, C/D=1-131"/>
</dbReference>
<dbReference type="PDBsum" id="1A0O"/>
<dbReference type="PDBsum" id="1EAY"/>
<dbReference type="PDBsum" id="1FFG"/>
<dbReference type="PDBsum" id="1FFS"/>
<dbReference type="PDBsum" id="1FFW"/>
<dbReference type="PDBsum" id="1FWP"/>
<dbReference type="PDBsum" id="2LP4"/>
<dbReference type="PDBsum" id="6S1K"/>
<dbReference type="PDBsum" id="8C5V"/>
<dbReference type="EMDB" id="EMD-15641"/>
<dbReference type="EMDB" id="EMD-3234"/>
<dbReference type="EMDB" id="EMD-6319"/>
<dbReference type="EMDB" id="EMD-6320"/>
<dbReference type="SMR" id="P07363"/>
<dbReference type="BioGRID" id="4261034">
    <property type="interactions" value="223"/>
</dbReference>
<dbReference type="ComplexPortal" id="CPX-1077">
    <property type="entry name" value="Chemotaxis phosphorelay complex CheA-CheY"/>
</dbReference>
<dbReference type="DIP" id="DIP-6053N"/>
<dbReference type="FunCoup" id="P07363">
    <property type="interactions" value="405"/>
</dbReference>
<dbReference type="IntAct" id="P07363">
    <property type="interactions" value="33"/>
</dbReference>
<dbReference type="STRING" id="511145.b1888"/>
<dbReference type="BindingDB" id="P07363"/>
<dbReference type="ChEMBL" id="CHEMBL4295999"/>
<dbReference type="iPTMnet" id="P07363"/>
<dbReference type="PaxDb" id="511145-b1888"/>
<dbReference type="EnsemblBacteria" id="AAC74958">
    <property type="protein sequence ID" value="AAC74958"/>
    <property type="gene ID" value="b1888"/>
</dbReference>
<dbReference type="GeneID" id="946401"/>
<dbReference type="KEGG" id="ecj:JW1877"/>
<dbReference type="PATRIC" id="fig|511145.12.peg.1969"/>
<dbReference type="EchoBASE" id="EB0144"/>
<dbReference type="eggNOG" id="COG0643">
    <property type="taxonomic scope" value="Bacteria"/>
</dbReference>
<dbReference type="eggNOG" id="COG2198">
    <property type="taxonomic scope" value="Bacteria"/>
</dbReference>
<dbReference type="HOGENOM" id="CLU_000650_3_6_6"/>
<dbReference type="InParanoid" id="P07363"/>
<dbReference type="OMA" id="IILNMRM"/>
<dbReference type="OrthoDB" id="9803176at2"/>
<dbReference type="PhylomeDB" id="P07363"/>
<dbReference type="BRENDA" id="2.7.13.3">
    <property type="organism ID" value="2026"/>
</dbReference>
<dbReference type="EvolutionaryTrace" id="P07363"/>
<dbReference type="PHI-base" id="PHI:6535"/>
<dbReference type="PRO" id="PR:P07363"/>
<dbReference type="Proteomes" id="UP000000625">
    <property type="component" value="Chromosome"/>
</dbReference>
<dbReference type="GO" id="GO:0005737">
    <property type="term" value="C:cytoplasm"/>
    <property type="evidence" value="ECO:0000314"/>
    <property type="project" value="EcoCyc"/>
</dbReference>
<dbReference type="GO" id="GO:0005829">
    <property type="term" value="C:cytosol"/>
    <property type="evidence" value="ECO:0000314"/>
    <property type="project" value="EcoCyc"/>
</dbReference>
<dbReference type="GO" id="GO:0098561">
    <property type="term" value="C:methyl accepting chemotaxis protein complex"/>
    <property type="evidence" value="ECO:0000314"/>
    <property type="project" value="EcoCyc"/>
</dbReference>
<dbReference type="GO" id="GO:0005886">
    <property type="term" value="C:plasma membrane"/>
    <property type="evidence" value="ECO:0000314"/>
    <property type="project" value="EcoCyc"/>
</dbReference>
<dbReference type="GO" id="GO:0005524">
    <property type="term" value="F:ATP binding"/>
    <property type="evidence" value="ECO:0007669"/>
    <property type="project" value="UniProtKB-KW"/>
</dbReference>
<dbReference type="GO" id="GO:0000155">
    <property type="term" value="F:phosphorelay sensor kinase activity"/>
    <property type="evidence" value="ECO:0000314"/>
    <property type="project" value="CACAO"/>
</dbReference>
<dbReference type="GO" id="GO:0004673">
    <property type="term" value="F:protein histidine kinase activity"/>
    <property type="evidence" value="ECO:0000314"/>
    <property type="project" value="EcoCyc"/>
</dbReference>
<dbReference type="GO" id="GO:0009454">
    <property type="term" value="P:aerotaxis"/>
    <property type="evidence" value="ECO:0000314"/>
    <property type="project" value="EcoCyc"/>
</dbReference>
<dbReference type="GO" id="GO:0071977">
    <property type="term" value="P:bacterial-type flagellum-dependent swimming motility"/>
    <property type="evidence" value="ECO:0000314"/>
    <property type="project" value="ComplexPortal"/>
</dbReference>
<dbReference type="GO" id="GO:0006935">
    <property type="term" value="P:chemotaxis"/>
    <property type="evidence" value="ECO:0000315"/>
    <property type="project" value="EcoCyc"/>
</dbReference>
<dbReference type="GO" id="GO:0051649">
    <property type="term" value="P:establishment of localization in cell"/>
    <property type="evidence" value="ECO:0000314"/>
    <property type="project" value="EcoCyc"/>
</dbReference>
<dbReference type="GO" id="GO:0031400">
    <property type="term" value="P:negative regulation of protein modification process"/>
    <property type="evidence" value="ECO:0000314"/>
    <property type="project" value="CACAO"/>
</dbReference>
<dbReference type="GO" id="GO:0000160">
    <property type="term" value="P:phosphorelay signal transduction system"/>
    <property type="evidence" value="ECO:0000314"/>
    <property type="project" value="EcoliWiki"/>
</dbReference>
<dbReference type="GO" id="GO:1901875">
    <property type="term" value="P:positive regulation of post-translational protein modification"/>
    <property type="evidence" value="ECO:0000314"/>
    <property type="project" value="CAFA"/>
</dbReference>
<dbReference type="GO" id="GO:1902021">
    <property type="term" value="P:regulation of bacterial-type flagellum-dependent cell motility"/>
    <property type="evidence" value="ECO:0000314"/>
    <property type="project" value="UniProtKB"/>
</dbReference>
<dbReference type="GO" id="GO:0050920">
    <property type="term" value="P:regulation of chemotaxis"/>
    <property type="evidence" value="ECO:0000314"/>
    <property type="project" value="UniProtKB"/>
</dbReference>
<dbReference type="GO" id="GO:0007165">
    <property type="term" value="P:signal transduction"/>
    <property type="evidence" value="ECO:0000314"/>
    <property type="project" value="EcoCyc"/>
</dbReference>
<dbReference type="GO" id="GO:0043052">
    <property type="term" value="P:thermotaxis"/>
    <property type="evidence" value="ECO:0000314"/>
    <property type="project" value="EcoCyc"/>
</dbReference>
<dbReference type="CDD" id="cd00731">
    <property type="entry name" value="CheA_reg"/>
    <property type="match status" value="1"/>
</dbReference>
<dbReference type="CDD" id="cd16916">
    <property type="entry name" value="HATPase_CheA-like"/>
    <property type="match status" value="1"/>
</dbReference>
<dbReference type="CDD" id="cd00088">
    <property type="entry name" value="HPT"/>
    <property type="match status" value="1"/>
</dbReference>
<dbReference type="DisProt" id="DP00407"/>
<dbReference type="FunFam" id="2.30.30.40:FF:000048">
    <property type="entry name" value="Chemotaxis protein CheA, putative"/>
    <property type="match status" value="1"/>
</dbReference>
<dbReference type="FunFam" id="3.30.565.10:FF:000016">
    <property type="entry name" value="Chemotaxis protein CheA, putative"/>
    <property type="match status" value="1"/>
</dbReference>
<dbReference type="Gene3D" id="3.30.70.400">
    <property type="entry name" value="CheY-binding domain of CheA"/>
    <property type="match status" value="1"/>
</dbReference>
<dbReference type="Gene3D" id="1.10.287.560">
    <property type="entry name" value="Histidine kinase CheA-like, homodimeric domain"/>
    <property type="match status" value="1"/>
</dbReference>
<dbReference type="Gene3D" id="3.30.565.10">
    <property type="entry name" value="Histidine kinase-like ATPase, C-terminal domain"/>
    <property type="match status" value="1"/>
</dbReference>
<dbReference type="Gene3D" id="1.20.120.160">
    <property type="entry name" value="HPT domain"/>
    <property type="match status" value="1"/>
</dbReference>
<dbReference type="Gene3D" id="2.30.30.40">
    <property type="entry name" value="SH3 Domains"/>
    <property type="match status" value="1"/>
</dbReference>
<dbReference type="InterPro" id="IPR051315">
    <property type="entry name" value="Bact_Chemotaxis_CheA"/>
</dbReference>
<dbReference type="InterPro" id="IPR004105">
    <property type="entry name" value="CheA-like_dim"/>
</dbReference>
<dbReference type="InterPro" id="IPR037006">
    <property type="entry name" value="CheA-like_homodim_sf"/>
</dbReference>
<dbReference type="InterPro" id="IPR036061">
    <property type="entry name" value="CheW-like_dom_sf"/>
</dbReference>
<dbReference type="InterPro" id="IPR002545">
    <property type="entry name" value="CheW-lke_dom"/>
</dbReference>
<dbReference type="InterPro" id="IPR015162">
    <property type="entry name" value="CheY-binding"/>
</dbReference>
<dbReference type="InterPro" id="IPR035891">
    <property type="entry name" value="CheY-binding_CheA"/>
</dbReference>
<dbReference type="InterPro" id="IPR036890">
    <property type="entry name" value="HATPase_C_sf"/>
</dbReference>
<dbReference type="InterPro" id="IPR005467">
    <property type="entry name" value="His_kinase_dom"/>
</dbReference>
<dbReference type="InterPro" id="IPR036097">
    <property type="entry name" value="HisK_dim/P_sf"/>
</dbReference>
<dbReference type="InterPro" id="IPR036641">
    <property type="entry name" value="HPT_dom_sf"/>
</dbReference>
<dbReference type="InterPro" id="IPR004358">
    <property type="entry name" value="Sig_transdc_His_kin-like_C"/>
</dbReference>
<dbReference type="InterPro" id="IPR008207">
    <property type="entry name" value="Sig_transdc_His_kin_Hpt_dom"/>
</dbReference>
<dbReference type="NCBIfam" id="NF007835">
    <property type="entry name" value="PRK10547.1"/>
    <property type="match status" value="1"/>
</dbReference>
<dbReference type="PANTHER" id="PTHR43395:SF10">
    <property type="entry name" value="CHEMOTAXIS PROTEIN CHEA"/>
    <property type="match status" value="1"/>
</dbReference>
<dbReference type="PANTHER" id="PTHR43395">
    <property type="entry name" value="SENSOR HISTIDINE KINASE CHEA"/>
    <property type="match status" value="1"/>
</dbReference>
<dbReference type="Pfam" id="PF01584">
    <property type="entry name" value="CheW"/>
    <property type="match status" value="1"/>
</dbReference>
<dbReference type="Pfam" id="PF09078">
    <property type="entry name" value="CheY-binding"/>
    <property type="match status" value="1"/>
</dbReference>
<dbReference type="Pfam" id="PF02895">
    <property type="entry name" value="H-kinase_dim"/>
    <property type="match status" value="1"/>
</dbReference>
<dbReference type="Pfam" id="PF02518">
    <property type="entry name" value="HATPase_c"/>
    <property type="match status" value="1"/>
</dbReference>
<dbReference type="Pfam" id="PF01627">
    <property type="entry name" value="Hpt"/>
    <property type="match status" value="1"/>
</dbReference>
<dbReference type="PRINTS" id="PR00344">
    <property type="entry name" value="BCTRLSENSOR"/>
</dbReference>
<dbReference type="SMART" id="SM00260">
    <property type="entry name" value="CheW"/>
    <property type="match status" value="1"/>
</dbReference>
<dbReference type="SMART" id="SM01231">
    <property type="entry name" value="H-kinase_dim"/>
    <property type="match status" value="1"/>
</dbReference>
<dbReference type="SMART" id="SM00387">
    <property type="entry name" value="HATPase_c"/>
    <property type="match status" value="1"/>
</dbReference>
<dbReference type="SMART" id="SM00073">
    <property type="entry name" value="HPT"/>
    <property type="match status" value="1"/>
</dbReference>
<dbReference type="SUPFAM" id="SSF55874">
    <property type="entry name" value="ATPase domain of HSP90 chaperone/DNA topoisomerase II/histidine kinase"/>
    <property type="match status" value="1"/>
</dbReference>
<dbReference type="SUPFAM" id="SSF50341">
    <property type="entry name" value="CheW-like"/>
    <property type="match status" value="1"/>
</dbReference>
<dbReference type="SUPFAM" id="SSF55052">
    <property type="entry name" value="CheY-binding domain of CheA"/>
    <property type="match status" value="1"/>
</dbReference>
<dbReference type="SUPFAM" id="SSF47226">
    <property type="entry name" value="Histidine-containing phosphotransfer domain, HPT domain"/>
    <property type="match status" value="1"/>
</dbReference>
<dbReference type="SUPFAM" id="SSF47384">
    <property type="entry name" value="Homodimeric domain of signal transducing histidine kinase"/>
    <property type="match status" value="1"/>
</dbReference>
<dbReference type="PROSITE" id="PS50851">
    <property type="entry name" value="CHEW"/>
    <property type="match status" value="1"/>
</dbReference>
<dbReference type="PROSITE" id="PS50109">
    <property type="entry name" value="HIS_KIN"/>
    <property type="match status" value="1"/>
</dbReference>
<dbReference type="PROSITE" id="PS50894">
    <property type="entry name" value="HPT"/>
    <property type="match status" value="1"/>
</dbReference>